<reference key="1">
    <citation type="journal article" date="2003" name="Proc. Natl. Acad. Sci. U.S.A.">
        <title>Reductive genome evolution in Buchnera aphidicola.</title>
        <authorList>
            <person name="van Ham R.C.H.J."/>
            <person name="Kamerbeek J."/>
            <person name="Palacios C."/>
            <person name="Rausell C."/>
            <person name="Abascal F."/>
            <person name="Bastolla U."/>
            <person name="Fernandez J.M."/>
            <person name="Jimenez L."/>
            <person name="Postigo M."/>
            <person name="Silva F.J."/>
            <person name="Tamames J."/>
            <person name="Viguera E."/>
            <person name="Latorre A."/>
            <person name="Valencia A."/>
            <person name="Moran F."/>
            <person name="Moya A."/>
        </authorList>
    </citation>
    <scope>NUCLEOTIDE SEQUENCE [LARGE SCALE GENOMIC DNA]</scope>
    <source>
        <strain>Bp</strain>
    </source>
</reference>
<dbReference type="EC" id="7.1.1.-"/>
<dbReference type="EMBL" id="AE016826">
    <property type="protein sequence ID" value="AAO26887.1"/>
    <property type="molecule type" value="Genomic_DNA"/>
</dbReference>
<dbReference type="RefSeq" id="WP_011091288.1">
    <property type="nucleotide sequence ID" value="NC_004545.1"/>
</dbReference>
<dbReference type="SMR" id="Q89AT6"/>
<dbReference type="STRING" id="224915.bbp_153"/>
<dbReference type="KEGG" id="bab:bbp_153"/>
<dbReference type="eggNOG" id="COG1009">
    <property type="taxonomic scope" value="Bacteria"/>
</dbReference>
<dbReference type="HOGENOM" id="CLU_007100_6_2_6"/>
<dbReference type="OrthoDB" id="9811798at2"/>
<dbReference type="Proteomes" id="UP000000601">
    <property type="component" value="Chromosome"/>
</dbReference>
<dbReference type="GO" id="GO:0005886">
    <property type="term" value="C:plasma membrane"/>
    <property type="evidence" value="ECO:0007669"/>
    <property type="project" value="UniProtKB-SubCell"/>
</dbReference>
<dbReference type="GO" id="GO:0008137">
    <property type="term" value="F:NADH dehydrogenase (ubiquinone) activity"/>
    <property type="evidence" value="ECO:0007669"/>
    <property type="project" value="InterPro"/>
</dbReference>
<dbReference type="GO" id="GO:0048038">
    <property type="term" value="F:quinone binding"/>
    <property type="evidence" value="ECO:0007669"/>
    <property type="project" value="UniProtKB-KW"/>
</dbReference>
<dbReference type="GO" id="GO:0042773">
    <property type="term" value="P:ATP synthesis coupled electron transport"/>
    <property type="evidence" value="ECO:0007669"/>
    <property type="project" value="InterPro"/>
</dbReference>
<dbReference type="GO" id="GO:0015990">
    <property type="term" value="P:electron transport coupled proton transport"/>
    <property type="evidence" value="ECO:0007669"/>
    <property type="project" value="TreeGrafter"/>
</dbReference>
<dbReference type="Gene3D" id="1.20.5.2700">
    <property type="match status" value="1"/>
</dbReference>
<dbReference type="InterPro" id="IPR018393">
    <property type="entry name" value="NADHpl_OxRdtase_5_subgr"/>
</dbReference>
<dbReference type="InterPro" id="IPR001750">
    <property type="entry name" value="ND/Mrp_TM"/>
</dbReference>
<dbReference type="InterPro" id="IPR003945">
    <property type="entry name" value="NU5C-like"/>
</dbReference>
<dbReference type="InterPro" id="IPR001516">
    <property type="entry name" value="Proton_antipo_N"/>
</dbReference>
<dbReference type="NCBIfam" id="TIGR01974">
    <property type="entry name" value="NDH_I_L"/>
    <property type="match status" value="1"/>
</dbReference>
<dbReference type="NCBIfam" id="NF005141">
    <property type="entry name" value="PRK06590.1"/>
    <property type="match status" value="1"/>
</dbReference>
<dbReference type="PANTHER" id="PTHR42829">
    <property type="entry name" value="NADH-UBIQUINONE OXIDOREDUCTASE CHAIN 5"/>
    <property type="match status" value="1"/>
</dbReference>
<dbReference type="PANTHER" id="PTHR42829:SF2">
    <property type="entry name" value="NADH-UBIQUINONE OXIDOREDUCTASE CHAIN 5"/>
    <property type="match status" value="1"/>
</dbReference>
<dbReference type="Pfam" id="PF00361">
    <property type="entry name" value="Proton_antipo_M"/>
    <property type="match status" value="1"/>
</dbReference>
<dbReference type="Pfam" id="PF00662">
    <property type="entry name" value="Proton_antipo_N"/>
    <property type="match status" value="1"/>
</dbReference>
<dbReference type="PRINTS" id="PR01434">
    <property type="entry name" value="NADHDHGNASE5"/>
</dbReference>
<dbReference type="PRINTS" id="PR01435">
    <property type="entry name" value="NPOXDRDTASE5"/>
</dbReference>
<feature type="chain" id="PRO_0000118216" description="NADH-quinone oxidoreductase subunit L">
    <location>
        <begin position="1"/>
        <end position="621"/>
    </location>
</feature>
<feature type="transmembrane region" description="Helical" evidence="2">
    <location>
        <begin position="2"/>
        <end position="22"/>
    </location>
</feature>
<feature type="transmembrane region" description="Helical" evidence="2">
    <location>
        <begin position="33"/>
        <end position="53"/>
    </location>
</feature>
<feature type="transmembrane region" description="Helical" evidence="2">
    <location>
        <begin position="59"/>
        <end position="79"/>
    </location>
</feature>
<feature type="transmembrane region" description="Helical" evidence="2">
    <location>
        <begin position="80"/>
        <end position="100"/>
    </location>
</feature>
<feature type="transmembrane region" description="Helical" evidence="2">
    <location>
        <begin position="123"/>
        <end position="143"/>
    </location>
</feature>
<feature type="transmembrane region" description="Helical" evidence="2">
    <location>
        <begin position="169"/>
        <end position="189"/>
    </location>
</feature>
<feature type="transmembrane region" description="Helical" evidence="2">
    <location>
        <begin position="210"/>
        <end position="230"/>
    </location>
</feature>
<feature type="transmembrane region" description="Helical" evidence="2">
    <location>
        <begin position="249"/>
        <end position="269"/>
    </location>
</feature>
<feature type="transmembrane region" description="Helical" evidence="2">
    <location>
        <begin position="274"/>
        <end position="294"/>
    </location>
</feature>
<feature type="transmembrane region" description="Helical" evidence="2">
    <location>
        <begin position="306"/>
        <end position="326"/>
    </location>
</feature>
<feature type="transmembrane region" description="Helical" evidence="2">
    <location>
        <begin position="338"/>
        <end position="358"/>
    </location>
</feature>
<feature type="transmembrane region" description="Helical" evidence="2">
    <location>
        <begin position="374"/>
        <end position="394"/>
    </location>
</feature>
<feature type="transmembrane region" description="Helical" evidence="2">
    <location>
        <begin position="412"/>
        <end position="432"/>
    </location>
</feature>
<feature type="transmembrane region" description="Helical" evidence="2">
    <location>
        <begin position="460"/>
        <end position="480"/>
    </location>
</feature>
<feature type="transmembrane region" description="Helical" evidence="2">
    <location>
        <begin position="500"/>
        <end position="520"/>
    </location>
</feature>
<feature type="transmembrane region" description="Helical" evidence="2">
    <location>
        <begin position="537"/>
        <end position="557"/>
    </location>
</feature>
<feature type="transmembrane region" description="Helical" evidence="2">
    <location>
        <begin position="597"/>
        <end position="617"/>
    </location>
</feature>
<organism>
    <name type="scientific">Buchnera aphidicola subsp. Baizongia pistaciae (strain Bp)</name>
    <dbReference type="NCBI Taxonomy" id="224915"/>
    <lineage>
        <taxon>Bacteria</taxon>
        <taxon>Pseudomonadati</taxon>
        <taxon>Pseudomonadota</taxon>
        <taxon>Gammaproteobacteria</taxon>
        <taxon>Enterobacterales</taxon>
        <taxon>Erwiniaceae</taxon>
        <taxon>Buchnera</taxon>
    </lineage>
</organism>
<protein>
    <recommendedName>
        <fullName>NADH-quinone oxidoreductase subunit L</fullName>
        <ecNumber>7.1.1.-</ecNumber>
    </recommendedName>
    <alternativeName>
        <fullName>NADH dehydrogenase I subunit L</fullName>
    </alternativeName>
    <alternativeName>
        <fullName>NDH-1 subunit L</fullName>
    </alternativeName>
</protein>
<comment type="function">
    <text evidence="1">NDH-1 shuttles electrons from NADH, via FMN and iron-sulfur (Fe-S) centers, to quinones in the respiratory chain. Couples the redox reaction to proton translocation (for every two electrons transferred, four hydrogen ions are translocated across the cytoplasmic membrane), and thus conserves the redox energy in a proton gradient (By similarity).</text>
</comment>
<comment type="catalytic activity">
    <reaction>
        <text>a quinone + NADH + 5 H(+)(in) = a quinol + NAD(+) + 4 H(+)(out)</text>
        <dbReference type="Rhea" id="RHEA:57888"/>
        <dbReference type="ChEBI" id="CHEBI:15378"/>
        <dbReference type="ChEBI" id="CHEBI:24646"/>
        <dbReference type="ChEBI" id="CHEBI:57540"/>
        <dbReference type="ChEBI" id="CHEBI:57945"/>
        <dbReference type="ChEBI" id="CHEBI:132124"/>
    </reaction>
</comment>
<comment type="subunit">
    <text evidence="1">Composed of 13 different subunits. Subunits NuoA, H, J, K, L, M, N constitute the membrane sector of the complex (By similarity).</text>
</comment>
<comment type="subcellular location">
    <subcellularLocation>
        <location evidence="3">Cell membrane</location>
        <topology evidence="3">Multi-pass membrane protein</topology>
    </subcellularLocation>
</comment>
<comment type="similarity">
    <text evidence="3">Belongs to the complex I subunit 5 family.</text>
</comment>
<name>NUOL_BUCBP</name>
<sequence length="621" mass="71078">MNFVYLVVLCPLVSFCLLLFFIDYLPKMLVKKIGIVSIFISMIITFYSLFDFLNCGKQCVFYIPLWVWISIDYLKIDFNFMLDGLSITMLTMTTSIGFLIHLFSSWYIKLQDEYTRFFSYMNLFIASMVLLLLADNLLVMYIGWEGVGLCSYLLVGFYYSKINSGYAAIKGFIITRIGDIFLILAIFFIYKNFGTLNFRELKLIFETTNVVENFKFLNYVSLFLLIAAIAKSAQVPLQTWLIDAMAGPTPASALIHSSTMVTAGVYLIARMNFLFSLSPIILYILGIISCLTIIMSCLSALVQKNIKCILAYSTMGQVGYMFLALAMKEWTLAINHLVTHAIFKTLLFLSAGAVIILLNNEKNIFNMGGLRKKFPMLYFSFLIGGASLASFPILTSGFYSKGNILFSALENNYYLFLVLGLLGSVLTSIYTFRMIFLVFCGAQKYRAHYVFFSRTLANTLPLLILILLSTVIFVLIHLPLSSVFSKTTPSFLINNNKLLFEIGCSVLSLLGMFISYYLFLVNRMLVDLLLNTKLGNFIYNFWYDSWGFNSLYNILCVNPYLYVAKRLKHDPINIFMSIPITFCFFVSKNLKYIHNGYLRVYVFSIMFGLFLFILMAIRLYK</sequence>
<proteinExistence type="inferred from homology"/>
<keyword id="KW-1003">Cell membrane</keyword>
<keyword id="KW-0472">Membrane</keyword>
<keyword id="KW-0520">NAD</keyword>
<keyword id="KW-0874">Quinone</keyword>
<keyword id="KW-1185">Reference proteome</keyword>
<keyword id="KW-1278">Translocase</keyword>
<keyword id="KW-0812">Transmembrane</keyword>
<keyword id="KW-1133">Transmembrane helix</keyword>
<gene>
    <name type="primary">nuoL</name>
    <name type="ordered locus">bbp_153</name>
</gene>
<evidence type="ECO:0000250" key="1"/>
<evidence type="ECO:0000255" key="2"/>
<evidence type="ECO:0000305" key="3"/>
<accession>Q89AT6</accession>